<proteinExistence type="evidence at protein level"/>
<protein>
    <recommendedName>
        <fullName>14-3-3 protein eta</fullName>
    </recommendedName>
</protein>
<feature type="initiator methionine" description="Removed" evidence="2">
    <location>
        <position position="1"/>
    </location>
</feature>
<feature type="chain" id="PRO_0000058624" description="14-3-3 protein eta">
    <location>
        <begin position="2"/>
        <end position="246"/>
    </location>
</feature>
<feature type="site" description="Interaction with phosphoserine on interacting protein" evidence="1">
    <location>
        <position position="57"/>
    </location>
</feature>
<feature type="site" description="Interaction with phosphoserine on interacting protein" evidence="1">
    <location>
        <position position="132"/>
    </location>
</feature>
<feature type="modified residue" description="N-acetylglycine" evidence="2">
    <location>
        <position position="2"/>
    </location>
</feature>
<feature type="modified residue" description="Phosphoserine" evidence="2">
    <location>
        <position position="25"/>
    </location>
</feature>
<feature type="modified residue" description="Phosphoserine" evidence="4">
    <location>
        <position position="59"/>
    </location>
</feature>
<feature type="sequence conflict" description="In Ref. 2; BAA13422." evidence="5" ref="2">
    <original>EQ</original>
    <variation>DE</variation>
    <location>
        <begin position="15"/>
        <end position="16"/>
    </location>
</feature>
<feature type="helix" evidence="6">
    <location>
        <begin position="3"/>
        <end position="16"/>
    </location>
</feature>
<feature type="helix" evidence="6">
    <location>
        <begin position="20"/>
        <end position="32"/>
    </location>
</feature>
<feature type="helix" evidence="6">
    <location>
        <begin position="39"/>
        <end position="62"/>
    </location>
</feature>
<feature type="turn" evidence="6">
    <location>
        <begin position="66"/>
        <end position="68"/>
    </location>
</feature>
<feature type="turn" evidence="6">
    <location>
        <begin position="76"/>
        <end position="78"/>
    </location>
</feature>
<feature type="helix" evidence="6">
    <location>
        <begin position="82"/>
        <end position="106"/>
    </location>
</feature>
<feature type="turn" evidence="6">
    <location>
        <begin position="107"/>
        <end position="111"/>
    </location>
</feature>
<feature type="helix" evidence="6">
    <location>
        <begin position="117"/>
        <end position="137"/>
    </location>
</feature>
<feature type="helix" evidence="6">
    <location>
        <begin position="140"/>
        <end position="164"/>
    </location>
</feature>
<feature type="helix" evidence="6">
    <location>
        <begin position="170"/>
        <end position="185"/>
    </location>
</feature>
<feature type="helix" evidence="6">
    <location>
        <begin position="190"/>
        <end position="207"/>
    </location>
</feature>
<feature type="helix" evidence="6">
    <location>
        <begin position="218"/>
        <end position="232"/>
    </location>
</feature>
<dbReference type="EMBL" id="U57311">
    <property type="protein sequence ID" value="AAC53256.1"/>
    <property type="molecule type" value="mRNA"/>
</dbReference>
<dbReference type="EMBL" id="D87661">
    <property type="protein sequence ID" value="BAA13422.1"/>
    <property type="molecule type" value="mRNA"/>
</dbReference>
<dbReference type="EMBL" id="AF077002">
    <property type="protein sequence ID" value="AAC36290.1"/>
    <property type="molecule type" value="mRNA"/>
</dbReference>
<dbReference type="EMBL" id="AB063572">
    <property type="protein sequence ID" value="BAB79599.1"/>
    <property type="molecule type" value="Genomic_DNA"/>
</dbReference>
<dbReference type="EMBL" id="AK077596">
    <property type="protein sequence ID" value="BAC36887.1"/>
    <property type="molecule type" value="mRNA"/>
</dbReference>
<dbReference type="EMBL" id="AK149224">
    <property type="protein sequence ID" value="BAE28768.1"/>
    <property type="molecule type" value="mRNA"/>
</dbReference>
<dbReference type="EMBL" id="AK168520">
    <property type="protein sequence ID" value="BAE40399.1"/>
    <property type="molecule type" value="mRNA"/>
</dbReference>
<dbReference type="EMBL" id="AK169035">
    <property type="protein sequence ID" value="BAE40826.1"/>
    <property type="molecule type" value="mRNA"/>
</dbReference>
<dbReference type="EMBL" id="AK169189">
    <property type="protein sequence ID" value="BAE40965.1"/>
    <property type="molecule type" value="mRNA"/>
</dbReference>
<dbReference type="EMBL" id="BC008187">
    <property type="protein sequence ID" value="AAH08187.1"/>
    <property type="molecule type" value="mRNA"/>
</dbReference>
<dbReference type="EMBL" id="BC061497">
    <property type="protein sequence ID" value="AAH61497.1"/>
    <property type="molecule type" value="mRNA"/>
</dbReference>
<dbReference type="CCDS" id="CCDS19198.1"/>
<dbReference type="RefSeq" id="NP_035868.1">
    <property type="nucleotide sequence ID" value="NM_011738.2"/>
</dbReference>
<dbReference type="PDB" id="5YQG">
    <property type="method" value="X-ray"/>
    <property type="resolution" value="2.10 A"/>
    <property type="chains" value="A/B/C/D=1-246"/>
</dbReference>
<dbReference type="PDBsum" id="5YQG"/>
<dbReference type="SMR" id="P68510"/>
<dbReference type="BioGRID" id="204621">
    <property type="interactions" value="44"/>
</dbReference>
<dbReference type="FunCoup" id="P68510">
    <property type="interactions" value="1662"/>
</dbReference>
<dbReference type="IntAct" id="P68510">
    <property type="interactions" value="323"/>
</dbReference>
<dbReference type="MINT" id="P68510"/>
<dbReference type="STRING" id="10090.ENSMUSP00000019109"/>
<dbReference type="GlyGen" id="P68510">
    <property type="glycosylation" value="1 site, 1 O-linked glycan (1 site)"/>
</dbReference>
<dbReference type="iPTMnet" id="P68510"/>
<dbReference type="PhosphoSitePlus" id="P68510"/>
<dbReference type="SwissPalm" id="P68510"/>
<dbReference type="CPTAC" id="non-CPTAC-3684"/>
<dbReference type="jPOST" id="P68510"/>
<dbReference type="PaxDb" id="10090-ENSMUSP00000019109"/>
<dbReference type="PeptideAtlas" id="P68510"/>
<dbReference type="ProteomicsDB" id="285811"/>
<dbReference type="Pumba" id="P68510"/>
<dbReference type="TopDownProteomics" id="P68510"/>
<dbReference type="Antibodypedia" id="11204">
    <property type="antibodies" value="314 antibodies from 37 providers"/>
</dbReference>
<dbReference type="DNASU" id="22629"/>
<dbReference type="Ensembl" id="ENSMUST00000019109.8">
    <property type="protein sequence ID" value="ENSMUSP00000019109.8"/>
    <property type="gene ID" value="ENSMUSG00000018965.12"/>
</dbReference>
<dbReference type="GeneID" id="22629"/>
<dbReference type="KEGG" id="mmu:22629"/>
<dbReference type="UCSC" id="uc008xag.2">
    <property type="organism name" value="mouse"/>
</dbReference>
<dbReference type="AGR" id="MGI:109194"/>
<dbReference type="CTD" id="7533"/>
<dbReference type="MGI" id="MGI:109194">
    <property type="gene designation" value="Ywhah"/>
</dbReference>
<dbReference type="VEuPathDB" id="HostDB:ENSMUSG00000018965"/>
<dbReference type="eggNOG" id="KOG0841">
    <property type="taxonomic scope" value="Eukaryota"/>
</dbReference>
<dbReference type="GeneTree" id="ENSGT01090000260040"/>
<dbReference type="HOGENOM" id="CLU_058290_0_0_1"/>
<dbReference type="InParanoid" id="P68510"/>
<dbReference type="OMA" id="KNCDESQ"/>
<dbReference type="OrthoDB" id="10260625at2759"/>
<dbReference type="PhylomeDB" id="P68510"/>
<dbReference type="TreeFam" id="TF102003"/>
<dbReference type="Reactome" id="R-MMU-111447">
    <property type="pathway name" value="Activation of BAD and translocation to mitochondria"/>
</dbReference>
<dbReference type="Reactome" id="R-MMU-5625740">
    <property type="pathway name" value="RHO GTPases activate PKNs"/>
</dbReference>
<dbReference type="Reactome" id="R-MMU-5628897">
    <property type="pathway name" value="TP53 Regulates Metabolic Genes"/>
</dbReference>
<dbReference type="Reactome" id="R-MMU-75035">
    <property type="pathway name" value="Chk1/Chk2(Cds1) mediated inactivation of Cyclin B:Cdk1 complex"/>
</dbReference>
<dbReference type="BioGRID-ORCS" id="22629">
    <property type="hits" value="2 hits in 116 CRISPR screens"/>
</dbReference>
<dbReference type="CD-CODE" id="CE726F99">
    <property type="entry name" value="Postsynaptic density"/>
</dbReference>
<dbReference type="ChiTaRS" id="Ywhah">
    <property type="organism name" value="mouse"/>
</dbReference>
<dbReference type="PRO" id="PR:P68510"/>
<dbReference type="Proteomes" id="UP000000589">
    <property type="component" value="Chromosome 5"/>
</dbReference>
<dbReference type="RNAct" id="P68510">
    <property type="molecule type" value="protein"/>
</dbReference>
<dbReference type="Bgee" id="ENSMUSG00000018965">
    <property type="expression patterns" value="Expressed in primary visual cortex and 129 other cell types or tissues"/>
</dbReference>
<dbReference type="GO" id="GO:0150048">
    <property type="term" value="C:cerebellar granule cell to Purkinje cell synapse"/>
    <property type="evidence" value="ECO:0000314"/>
    <property type="project" value="SynGO"/>
</dbReference>
<dbReference type="GO" id="GO:0005737">
    <property type="term" value="C:cytoplasm"/>
    <property type="evidence" value="ECO:0000314"/>
    <property type="project" value="MGI"/>
</dbReference>
<dbReference type="GO" id="GO:0005829">
    <property type="term" value="C:cytosol"/>
    <property type="evidence" value="ECO:0000304"/>
    <property type="project" value="Reactome"/>
</dbReference>
<dbReference type="GO" id="GO:0098978">
    <property type="term" value="C:glutamatergic synapse"/>
    <property type="evidence" value="ECO:0000314"/>
    <property type="project" value="SynGO"/>
</dbReference>
<dbReference type="GO" id="GO:0014704">
    <property type="term" value="C:intercalated disc"/>
    <property type="evidence" value="ECO:0000305"/>
    <property type="project" value="BHF-UCL"/>
</dbReference>
<dbReference type="GO" id="GO:0005739">
    <property type="term" value="C:mitochondrion"/>
    <property type="evidence" value="ECO:0007669"/>
    <property type="project" value="Ensembl"/>
</dbReference>
<dbReference type="GO" id="GO:0005886">
    <property type="term" value="C:plasma membrane"/>
    <property type="evidence" value="ECO:0007669"/>
    <property type="project" value="Ensembl"/>
</dbReference>
<dbReference type="GO" id="GO:0098793">
    <property type="term" value="C:presynapse"/>
    <property type="evidence" value="ECO:0000314"/>
    <property type="project" value="SynGO"/>
</dbReference>
<dbReference type="GO" id="GO:0003779">
    <property type="term" value="F:actin binding"/>
    <property type="evidence" value="ECO:0000314"/>
    <property type="project" value="ProtInc"/>
</dbReference>
<dbReference type="GO" id="GO:0019899">
    <property type="term" value="F:enzyme binding"/>
    <property type="evidence" value="ECO:0007669"/>
    <property type="project" value="Ensembl"/>
</dbReference>
<dbReference type="GO" id="GO:0042802">
    <property type="term" value="F:identical protein binding"/>
    <property type="evidence" value="ECO:0007669"/>
    <property type="project" value="Ensembl"/>
</dbReference>
<dbReference type="GO" id="GO:0035259">
    <property type="term" value="F:nuclear glucocorticoid receptor binding"/>
    <property type="evidence" value="ECO:0000250"/>
    <property type="project" value="UniProtKB"/>
</dbReference>
<dbReference type="GO" id="GO:0019904">
    <property type="term" value="F:protein domain specific binding"/>
    <property type="evidence" value="ECO:0000314"/>
    <property type="project" value="MGI"/>
</dbReference>
<dbReference type="GO" id="GO:0046982">
    <property type="term" value="F:protein heterodimerization activity"/>
    <property type="evidence" value="ECO:0007669"/>
    <property type="project" value="Ensembl"/>
</dbReference>
<dbReference type="GO" id="GO:0017080">
    <property type="term" value="F:sodium channel regulator activity"/>
    <property type="evidence" value="ECO:0000250"/>
    <property type="project" value="BHF-UCL"/>
</dbReference>
<dbReference type="GO" id="GO:0044325">
    <property type="term" value="F:transmembrane transporter binding"/>
    <property type="evidence" value="ECO:0000353"/>
    <property type="project" value="BHF-UCL"/>
</dbReference>
<dbReference type="GO" id="GO:0007010">
    <property type="term" value="P:cytoskeleton organization"/>
    <property type="evidence" value="ECO:0000303"/>
    <property type="project" value="ProtInc"/>
</dbReference>
<dbReference type="GO" id="GO:0006713">
    <property type="term" value="P:glucocorticoid catabolic process"/>
    <property type="evidence" value="ECO:0000250"/>
    <property type="project" value="UniProtKB"/>
</dbReference>
<dbReference type="GO" id="GO:0006886">
    <property type="term" value="P:intracellular protein transport"/>
    <property type="evidence" value="ECO:0000314"/>
    <property type="project" value="MGI"/>
</dbReference>
<dbReference type="GO" id="GO:0086010">
    <property type="term" value="P:membrane depolarization during action potential"/>
    <property type="evidence" value="ECO:0000250"/>
    <property type="project" value="BHF-UCL"/>
</dbReference>
<dbReference type="GO" id="GO:0043066">
    <property type="term" value="P:negative regulation of apoptotic process"/>
    <property type="evidence" value="ECO:0000303"/>
    <property type="project" value="ProtInc"/>
</dbReference>
<dbReference type="GO" id="GO:0050774">
    <property type="term" value="P:negative regulation of dendrite morphogenesis"/>
    <property type="evidence" value="ECO:0000314"/>
    <property type="project" value="MGI"/>
</dbReference>
<dbReference type="GO" id="GO:0042921">
    <property type="term" value="P:nuclear receptor-mediated glucocorticoid signaling pathway"/>
    <property type="evidence" value="ECO:0000250"/>
    <property type="project" value="UniProtKB"/>
</dbReference>
<dbReference type="GO" id="GO:0045893">
    <property type="term" value="P:positive regulation of DNA-templated transcription"/>
    <property type="evidence" value="ECO:0000250"/>
    <property type="project" value="UniProtKB"/>
</dbReference>
<dbReference type="GO" id="GO:0099171">
    <property type="term" value="P:presynaptic modulation of chemical synaptic transmission"/>
    <property type="evidence" value="ECO:0000314"/>
    <property type="project" value="SynGO"/>
</dbReference>
<dbReference type="GO" id="GO:0007088">
    <property type="term" value="P:regulation of mitotic nuclear division"/>
    <property type="evidence" value="ECO:0000303"/>
    <property type="project" value="ProtInc"/>
</dbReference>
<dbReference type="GO" id="GO:0002028">
    <property type="term" value="P:regulation of sodium ion transport"/>
    <property type="evidence" value="ECO:0000250"/>
    <property type="project" value="BHF-UCL"/>
</dbReference>
<dbReference type="CDD" id="cd10025">
    <property type="entry name" value="14-3-3_eta"/>
    <property type="match status" value="1"/>
</dbReference>
<dbReference type="FunFam" id="1.20.190.20:FF:000001">
    <property type="entry name" value="14-3-3 gamma 1"/>
    <property type="match status" value="1"/>
</dbReference>
<dbReference type="Gene3D" id="1.20.190.20">
    <property type="entry name" value="14-3-3 domain"/>
    <property type="match status" value="1"/>
</dbReference>
<dbReference type="InterPro" id="IPR000308">
    <property type="entry name" value="14-3-3"/>
</dbReference>
<dbReference type="InterPro" id="IPR023409">
    <property type="entry name" value="14-3-3_CS"/>
</dbReference>
<dbReference type="InterPro" id="IPR036815">
    <property type="entry name" value="14-3-3_dom_sf"/>
</dbReference>
<dbReference type="InterPro" id="IPR023410">
    <property type="entry name" value="14-3-3_domain"/>
</dbReference>
<dbReference type="PANTHER" id="PTHR18860">
    <property type="entry name" value="14-3-3 PROTEIN"/>
    <property type="match status" value="1"/>
</dbReference>
<dbReference type="Pfam" id="PF00244">
    <property type="entry name" value="14-3-3"/>
    <property type="match status" value="1"/>
</dbReference>
<dbReference type="PIRSF" id="PIRSF000868">
    <property type="entry name" value="14-3-3"/>
    <property type="match status" value="1"/>
</dbReference>
<dbReference type="PRINTS" id="PR00305">
    <property type="entry name" value="1433ZETA"/>
</dbReference>
<dbReference type="SMART" id="SM00101">
    <property type="entry name" value="14_3_3"/>
    <property type="match status" value="1"/>
</dbReference>
<dbReference type="SUPFAM" id="SSF48445">
    <property type="entry name" value="14-3-3 protein"/>
    <property type="match status" value="1"/>
</dbReference>
<dbReference type="PROSITE" id="PS00796">
    <property type="entry name" value="1433_1"/>
    <property type="match status" value="1"/>
</dbReference>
<dbReference type="PROSITE" id="PS00797">
    <property type="entry name" value="1433_2"/>
    <property type="match status" value="1"/>
</dbReference>
<evidence type="ECO:0000250" key="1"/>
<evidence type="ECO:0000250" key="2">
    <source>
        <dbReference type="UniProtKB" id="Q04917"/>
    </source>
</evidence>
<evidence type="ECO:0000269" key="3">
    <source>
    </source>
</evidence>
<evidence type="ECO:0000269" key="4">
    <source>
    </source>
</evidence>
<evidence type="ECO:0000305" key="5"/>
<evidence type="ECO:0007829" key="6">
    <source>
        <dbReference type="PDB" id="5YQG"/>
    </source>
</evidence>
<reference key="1">
    <citation type="journal article" date="1997" name="Mol. Gen. Genet.">
        <title>The Cdk-like protein PCTAIRE-1 from mouse brain associates with p11 and 14-3-3 proteins.</title>
        <authorList>
            <person name="Sladeczek F."/>
            <person name="Camonis J.H."/>
            <person name="Burnol A.-F."/>
            <person name="Le Bouffant F."/>
        </authorList>
    </citation>
    <scope>NUCLEOTIDE SEQUENCE [MRNA]</scope>
    <scope>INTERACTION WITH CDK16</scope>
    <source>
        <tissue>Brain</tissue>
    </source>
</reference>
<reference key="2">
    <citation type="submission" date="1996-09" db="EMBL/GenBank/DDBJ databases">
        <authorList>
            <person name="Takihara Y."/>
            <person name="Irie K."/>
            <person name="Nomura M."/>
            <person name="Motaleb M."/>
            <person name="Matsumoto K."/>
            <person name="Shimada K."/>
        </authorList>
    </citation>
    <scope>NUCLEOTIDE SEQUENCE [MRNA]</scope>
    <source>
        <strain>129/Sv</strain>
    </source>
</reference>
<reference key="3">
    <citation type="journal article" date="1998" name="J. Biol. Chem.">
        <title>Association of the TLX-2 homeodomain and 14-3-3eta signaling proteins.</title>
        <authorList>
            <person name="Tang S.J."/>
            <person name="Seun T.-C."/>
            <person name="McInnes R.R."/>
            <person name="Buchwald M."/>
        </authorList>
    </citation>
    <scope>NUCLEOTIDE SEQUENCE [MRNA]</scope>
</reference>
<reference key="4">
    <citation type="journal article" date="2002" name="Brain Res. Mol. Brain Res.">
        <title>Isolation and structure of the mouse 14-3-3 eta chain gene and the distribution of 14-3-3 eta mRNA in the mouse brain.</title>
        <authorList>
            <person name="Toyooka K."/>
            <person name="Muratake T."/>
            <person name="Watanabe H."/>
            <person name="Hayashi S."/>
            <person name="Ichikawa T."/>
            <person name="Usui H."/>
            <person name="Washiyama K."/>
            <person name="Kumanishi T."/>
            <person name="Takahashi Y."/>
        </authorList>
    </citation>
    <scope>NUCLEOTIDE SEQUENCE [GENOMIC DNA]</scope>
</reference>
<reference key="5">
    <citation type="journal article" date="2005" name="Science">
        <title>The transcriptional landscape of the mammalian genome.</title>
        <authorList>
            <person name="Carninci P."/>
            <person name="Kasukawa T."/>
            <person name="Katayama S."/>
            <person name="Gough J."/>
            <person name="Frith M.C."/>
            <person name="Maeda N."/>
            <person name="Oyama R."/>
            <person name="Ravasi T."/>
            <person name="Lenhard B."/>
            <person name="Wells C."/>
            <person name="Kodzius R."/>
            <person name="Shimokawa K."/>
            <person name="Bajic V.B."/>
            <person name="Brenner S.E."/>
            <person name="Batalov S."/>
            <person name="Forrest A.R."/>
            <person name="Zavolan M."/>
            <person name="Davis M.J."/>
            <person name="Wilming L.G."/>
            <person name="Aidinis V."/>
            <person name="Allen J.E."/>
            <person name="Ambesi-Impiombato A."/>
            <person name="Apweiler R."/>
            <person name="Aturaliya R.N."/>
            <person name="Bailey T.L."/>
            <person name="Bansal M."/>
            <person name="Baxter L."/>
            <person name="Beisel K.W."/>
            <person name="Bersano T."/>
            <person name="Bono H."/>
            <person name="Chalk A.M."/>
            <person name="Chiu K.P."/>
            <person name="Choudhary V."/>
            <person name="Christoffels A."/>
            <person name="Clutterbuck D.R."/>
            <person name="Crowe M.L."/>
            <person name="Dalla E."/>
            <person name="Dalrymple B.P."/>
            <person name="de Bono B."/>
            <person name="Della Gatta G."/>
            <person name="di Bernardo D."/>
            <person name="Down T."/>
            <person name="Engstrom P."/>
            <person name="Fagiolini M."/>
            <person name="Faulkner G."/>
            <person name="Fletcher C.F."/>
            <person name="Fukushima T."/>
            <person name="Furuno M."/>
            <person name="Futaki S."/>
            <person name="Gariboldi M."/>
            <person name="Georgii-Hemming P."/>
            <person name="Gingeras T.R."/>
            <person name="Gojobori T."/>
            <person name="Green R.E."/>
            <person name="Gustincich S."/>
            <person name="Harbers M."/>
            <person name="Hayashi Y."/>
            <person name="Hensch T.K."/>
            <person name="Hirokawa N."/>
            <person name="Hill D."/>
            <person name="Huminiecki L."/>
            <person name="Iacono M."/>
            <person name="Ikeo K."/>
            <person name="Iwama A."/>
            <person name="Ishikawa T."/>
            <person name="Jakt M."/>
            <person name="Kanapin A."/>
            <person name="Katoh M."/>
            <person name="Kawasawa Y."/>
            <person name="Kelso J."/>
            <person name="Kitamura H."/>
            <person name="Kitano H."/>
            <person name="Kollias G."/>
            <person name="Krishnan S.P."/>
            <person name="Kruger A."/>
            <person name="Kummerfeld S.K."/>
            <person name="Kurochkin I.V."/>
            <person name="Lareau L.F."/>
            <person name="Lazarevic D."/>
            <person name="Lipovich L."/>
            <person name="Liu J."/>
            <person name="Liuni S."/>
            <person name="McWilliam S."/>
            <person name="Madan Babu M."/>
            <person name="Madera M."/>
            <person name="Marchionni L."/>
            <person name="Matsuda H."/>
            <person name="Matsuzawa S."/>
            <person name="Miki H."/>
            <person name="Mignone F."/>
            <person name="Miyake S."/>
            <person name="Morris K."/>
            <person name="Mottagui-Tabar S."/>
            <person name="Mulder N."/>
            <person name="Nakano N."/>
            <person name="Nakauchi H."/>
            <person name="Ng P."/>
            <person name="Nilsson R."/>
            <person name="Nishiguchi S."/>
            <person name="Nishikawa S."/>
            <person name="Nori F."/>
            <person name="Ohara O."/>
            <person name="Okazaki Y."/>
            <person name="Orlando V."/>
            <person name="Pang K.C."/>
            <person name="Pavan W.J."/>
            <person name="Pavesi G."/>
            <person name="Pesole G."/>
            <person name="Petrovsky N."/>
            <person name="Piazza S."/>
            <person name="Reed J."/>
            <person name="Reid J.F."/>
            <person name="Ring B.Z."/>
            <person name="Ringwald M."/>
            <person name="Rost B."/>
            <person name="Ruan Y."/>
            <person name="Salzberg S.L."/>
            <person name="Sandelin A."/>
            <person name="Schneider C."/>
            <person name="Schoenbach C."/>
            <person name="Sekiguchi K."/>
            <person name="Semple C.A."/>
            <person name="Seno S."/>
            <person name="Sessa L."/>
            <person name="Sheng Y."/>
            <person name="Shibata Y."/>
            <person name="Shimada H."/>
            <person name="Shimada K."/>
            <person name="Silva D."/>
            <person name="Sinclair B."/>
            <person name="Sperling S."/>
            <person name="Stupka E."/>
            <person name="Sugiura K."/>
            <person name="Sultana R."/>
            <person name="Takenaka Y."/>
            <person name="Taki K."/>
            <person name="Tammoja K."/>
            <person name="Tan S.L."/>
            <person name="Tang S."/>
            <person name="Taylor M.S."/>
            <person name="Tegner J."/>
            <person name="Teichmann S.A."/>
            <person name="Ueda H.R."/>
            <person name="van Nimwegen E."/>
            <person name="Verardo R."/>
            <person name="Wei C.L."/>
            <person name="Yagi K."/>
            <person name="Yamanishi H."/>
            <person name="Zabarovsky E."/>
            <person name="Zhu S."/>
            <person name="Zimmer A."/>
            <person name="Hide W."/>
            <person name="Bult C."/>
            <person name="Grimmond S.M."/>
            <person name="Teasdale R.D."/>
            <person name="Liu E.T."/>
            <person name="Brusic V."/>
            <person name="Quackenbush J."/>
            <person name="Wahlestedt C."/>
            <person name="Mattick J.S."/>
            <person name="Hume D.A."/>
            <person name="Kai C."/>
            <person name="Sasaki D."/>
            <person name="Tomaru Y."/>
            <person name="Fukuda S."/>
            <person name="Kanamori-Katayama M."/>
            <person name="Suzuki M."/>
            <person name="Aoki J."/>
            <person name="Arakawa T."/>
            <person name="Iida J."/>
            <person name="Imamura K."/>
            <person name="Itoh M."/>
            <person name="Kato T."/>
            <person name="Kawaji H."/>
            <person name="Kawagashira N."/>
            <person name="Kawashima T."/>
            <person name="Kojima M."/>
            <person name="Kondo S."/>
            <person name="Konno H."/>
            <person name="Nakano K."/>
            <person name="Ninomiya N."/>
            <person name="Nishio T."/>
            <person name="Okada M."/>
            <person name="Plessy C."/>
            <person name="Shibata K."/>
            <person name="Shiraki T."/>
            <person name="Suzuki S."/>
            <person name="Tagami M."/>
            <person name="Waki K."/>
            <person name="Watahiki A."/>
            <person name="Okamura-Oho Y."/>
            <person name="Suzuki H."/>
            <person name="Kawai J."/>
            <person name="Hayashizaki Y."/>
        </authorList>
    </citation>
    <scope>NUCLEOTIDE SEQUENCE [LARGE SCALE MRNA]</scope>
    <source>
        <strain>C57BL/6J</strain>
        <tissue>Heart</tissue>
        <tissue>Kidney</tissue>
        <tissue>Sympathetic ganglion</tissue>
    </source>
</reference>
<reference key="6">
    <citation type="journal article" date="2004" name="Genome Res.">
        <title>The status, quality, and expansion of the NIH full-length cDNA project: the Mammalian Gene Collection (MGC).</title>
        <authorList>
            <consortium name="The MGC Project Team"/>
        </authorList>
    </citation>
    <scope>NUCLEOTIDE SEQUENCE [LARGE SCALE MRNA]</scope>
    <source>
        <strain>FVB/N</strain>
        <tissue>Mammary tumor</tissue>
    </source>
</reference>
<reference key="7">
    <citation type="submission" date="2009-01" db="UniProtKB">
        <authorList>
            <person name="Lubec G."/>
            <person name="Kang S.U."/>
            <person name="Sunyer B."/>
            <person name="Chen W.-Q."/>
        </authorList>
    </citation>
    <scope>PROTEIN SEQUENCE OF 13-56; 62-69; 92-106; 111-120; 133-172 AND 199-227</scope>
    <scope>IDENTIFICATION BY MASS SPECTROMETRY</scope>
    <source>
        <strain>C57BL/6J</strain>
        <strain>OF1</strain>
        <tissue>Brain</tissue>
        <tissue>Hippocampus</tissue>
    </source>
</reference>
<reference key="8">
    <citation type="journal article" date="1998" name="J. Biol. Chem.">
        <title>A novel sphingosine-dependent protein kinase (SDK1) specifically phosphorylates certain isoforms of 14-3-3 protein.</title>
        <authorList>
            <person name="Megidish T."/>
            <person name="Cooper J."/>
            <person name="Zhang L."/>
            <person name="Fu H."/>
            <person name="Hakomori S."/>
        </authorList>
    </citation>
    <scope>PHOSPHORYLATION AT SER-59</scope>
</reference>
<reference key="9">
    <citation type="journal article" date="2001" name="J. Biol. Chem.">
        <title>Identification of a novel interaction of 14-3-3 with p190RhoGEF.</title>
        <authorList>
            <person name="Zhai J."/>
            <person name="Lin H."/>
            <person name="Shamim M."/>
            <person name="Schlaepfer W.W."/>
            <person name="Canete-Soler R."/>
        </authorList>
    </citation>
    <scope>INTERACTION WITH ARHGEF28</scope>
</reference>
<reference key="10">
    <citation type="journal article" date="2008" name="J. Biol. Chem.">
        <title>Phosphorylation-dependent binding of 14-3-3 proteins controls TRESK regulation.</title>
        <authorList>
            <person name="Czirjak G."/>
            <person name="Vuity D."/>
            <person name="Enyedi P."/>
        </authorList>
    </citation>
    <scope>INTERACTION WITH KCNK18</scope>
</reference>
<reference key="11">
    <citation type="journal article" date="2010" name="Cell">
        <title>A tissue-specific atlas of mouse protein phosphorylation and expression.</title>
        <authorList>
            <person name="Huttlin E.L."/>
            <person name="Jedrychowski M.P."/>
            <person name="Elias J.E."/>
            <person name="Goswami T."/>
            <person name="Rad R."/>
            <person name="Beausoleil S.A."/>
            <person name="Villen J."/>
            <person name="Haas W."/>
            <person name="Sowa M.E."/>
            <person name="Gygi S.P."/>
        </authorList>
    </citation>
    <scope>IDENTIFICATION BY MASS SPECTROMETRY [LARGE SCALE ANALYSIS]</scope>
    <source>
        <tissue>Brain</tissue>
        <tissue>Brown adipose tissue</tissue>
        <tissue>Heart</tissue>
        <tissue>Kidney</tissue>
        <tissue>Liver</tissue>
        <tissue>Lung</tissue>
        <tissue>Pancreas</tissue>
        <tissue>Spleen</tissue>
        <tissue>Testis</tissue>
    </source>
</reference>
<reference key="12">
    <citation type="journal article" date="2010" name="Int. J. Biochem. Cell Biol.">
        <title>SLy2 targets the nuclear SAP30/HDAC1 complex.</title>
        <authorList>
            <person name="Brandt S."/>
            <person name="Ellwanger K."/>
            <person name="Beuter-Gunia C."/>
            <person name="Schuster M."/>
            <person name="Hausser A."/>
            <person name="Schmitz I."/>
            <person name="Beer-Hammer S."/>
        </authorList>
    </citation>
    <scope>INTERACTION WITH SAMSN1</scope>
</reference>
<reference key="13">
    <citation type="journal article" date="2015" name="Biochem. Biophys. Res. Commun.">
        <title>Suppression of death-associated protein kinase 2 by interaction with 14-3-3 proteins.</title>
        <authorList>
            <person name="Yuasa K."/>
            <person name="Ota R."/>
            <person name="Matsuda S."/>
            <person name="Isshiki K."/>
            <person name="Inoue M."/>
            <person name="Tsuji A."/>
        </authorList>
    </citation>
    <scope>INTERACTION WITH DAPK2</scope>
</reference>
<accession>P68510</accession>
<accession>P11576</accession>
<accession>P70198</accession>
<accession>Q3TGZ9</accession>
<name>1433F_MOUSE</name>
<keyword id="KW-0002">3D-structure</keyword>
<keyword id="KW-0007">Acetylation</keyword>
<keyword id="KW-0963">Cytoplasm</keyword>
<keyword id="KW-0903">Direct protein sequencing</keyword>
<keyword id="KW-0597">Phosphoprotein</keyword>
<keyword id="KW-1185">Reference proteome</keyword>
<gene>
    <name type="primary">Ywhah</name>
</gene>
<sequence>MGDREQLLQRARLAEQAERYDDMASAMKAVTELNEPLSNEDRNLLSVAYKNVVGARRSSWRVISSIEQKTMADGNEKKLEKVKAYREKIEKELETVCNDVLALLDKFLIKNCNDFQYESKVFYLKMKGDYYRYLAEVASGEKKNSVVEASEAAYKEAFEISKEHMQPTHPIRLGLALNFSVFYYEIQNAPEQACLLAKQAFDDAIAELDTLNEDSYKDSTLIMQLLRDNLTLWTSDQQDEEAGEGN</sequence>
<comment type="function">
    <text evidence="1">Adapter protein implicated in the regulation of a large spectrum of both general and specialized signaling pathways. Binds to a large number of partners, usually by recognition of a phosphoserine or phosphothreonine motif. Binding generally results in the modulation of the activity of the binding partner. Negatively regulates the kinase activity of PDPK1 (By similarity).</text>
</comment>
<comment type="subunit">
    <text evidence="1 2 3">Homodimer (By similarity). Interacts with many nuclear hormone receptors and cofactors including AR, ESR1, ESR2, MC2R, NR3C1, NRIP1, PPARBP and THRA. Interacts with ABL1 (phosphorylated form); the interaction retains it in the cytoplasm. Weakly interacts with CDKN1B (By similarity). Interacts with ARHGEF28 and CDK16. Interacts with KCNK18 in a phosphorylation-dependent manner. Interacts with SAMSN1. Interacts with the 'Ser-241' phosphorylated form of PDPK1 (By similarity). Interacts with the 'Thr-369' phosphorylated form of DAPK2 (PubMed:26047703). Interacts with PI4KB, TBC1D22A and TBC1D22B (By similarity). Interacts with SLITRK1 (By similarity). Interacts with MEFV (By similarity).</text>
</comment>
<comment type="interaction">
    <interactant intactId="EBI-444641">
        <id>P68510</id>
    </interactant>
    <interactant intactId="EBI-2693710">
        <id>Q5S006</id>
        <label>Lrrk2</label>
    </interactant>
    <organismsDiffer>false</organismsDiffer>
    <experiments>7</experiments>
</comment>
<comment type="interaction">
    <interactant intactId="EBI-444641">
        <id>P68510</id>
    </interactant>
    <interactant intactId="EBI-973635">
        <id>Q9WVS6</id>
        <label>Prkn</label>
    </interactant>
    <organismsDiffer>false</organismsDiffer>
    <experiments>2</experiments>
</comment>
<comment type="interaction">
    <interactant intactId="EBI-444641">
        <id>P68510</id>
    </interactant>
    <interactant intactId="EBI-716346">
        <id>O60260</id>
        <label>PRKN</label>
    </interactant>
    <organismsDiffer>true</organismsDiffer>
    <experiments>6</experiments>
</comment>
<comment type="interaction">
    <interactant intactId="EBI-444641">
        <id>P68510</id>
    </interactant>
    <interactant intactId="EBI-527670">
        <id>P21580</id>
        <label>TNFAIP3</label>
    </interactant>
    <organismsDiffer>true</organismsDiffer>
    <experiments>3</experiments>
</comment>
<comment type="subcellular location">
    <subcellularLocation>
        <location>Cytoplasm</location>
    </subcellularLocation>
</comment>
<comment type="PTM">
    <text evidence="4">Phosphorylated on Ser-59 by protein kinase C delta type catalytic subunit in a sphingosine-dependent fashion.</text>
</comment>
<comment type="similarity">
    <text evidence="5">Belongs to the 14-3-3 family.</text>
</comment>
<organism>
    <name type="scientific">Mus musculus</name>
    <name type="common">Mouse</name>
    <dbReference type="NCBI Taxonomy" id="10090"/>
    <lineage>
        <taxon>Eukaryota</taxon>
        <taxon>Metazoa</taxon>
        <taxon>Chordata</taxon>
        <taxon>Craniata</taxon>
        <taxon>Vertebrata</taxon>
        <taxon>Euteleostomi</taxon>
        <taxon>Mammalia</taxon>
        <taxon>Eutheria</taxon>
        <taxon>Euarchontoglires</taxon>
        <taxon>Glires</taxon>
        <taxon>Rodentia</taxon>
        <taxon>Myomorpha</taxon>
        <taxon>Muroidea</taxon>
        <taxon>Muridae</taxon>
        <taxon>Murinae</taxon>
        <taxon>Mus</taxon>
        <taxon>Mus</taxon>
    </lineage>
</organism>